<proteinExistence type="inferred from homology"/>
<protein>
    <recommendedName>
        <fullName>Glycosyl hydrolase family 19 domain-containing protein HI_1415</fullName>
    </recommendedName>
</protein>
<gene>
    <name type="ordered locus">HI_1415</name>
</gene>
<reference key="1">
    <citation type="journal article" date="1995" name="Science">
        <title>Whole-genome random sequencing and assembly of Haemophilus influenzae Rd.</title>
        <authorList>
            <person name="Fleischmann R.D."/>
            <person name="Adams M.D."/>
            <person name="White O."/>
            <person name="Clayton R.A."/>
            <person name="Kirkness E.F."/>
            <person name="Kerlavage A.R."/>
            <person name="Bult C.J."/>
            <person name="Tomb J.-F."/>
            <person name="Dougherty B.A."/>
            <person name="Merrick J.M."/>
            <person name="McKenney K."/>
            <person name="Sutton G.G."/>
            <person name="FitzHugh W."/>
            <person name="Fields C.A."/>
            <person name="Gocayne J.D."/>
            <person name="Scott J.D."/>
            <person name="Shirley R."/>
            <person name="Liu L.-I."/>
            <person name="Glodek A."/>
            <person name="Kelley J.M."/>
            <person name="Weidman J.F."/>
            <person name="Phillips C.A."/>
            <person name="Spriggs T."/>
            <person name="Hedblom E."/>
            <person name="Cotton M.D."/>
            <person name="Utterback T.R."/>
            <person name="Hanna M.C."/>
            <person name="Nguyen D.T."/>
            <person name="Saudek D.M."/>
            <person name="Brandon R.C."/>
            <person name="Fine L.D."/>
            <person name="Fritchman J.L."/>
            <person name="Fuhrmann J.L."/>
            <person name="Geoghagen N.S.M."/>
            <person name="Gnehm C.L."/>
            <person name="McDonald L.A."/>
            <person name="Small K.V."/>
            <person name="Fraser C.M."/>
            <person name="Smith H.O."/>
            <person name="Venter J.C."/>
        </authorList>
    </citation>
    <scope>NUCLEOTIDE SEQUENCE [LARGE SCALE GENOMIC DNA]</scope>
    <source>
        <strain>ATCC 51907 / DSM 11121 / KW20 / Rd</strain>
    </source>
</reference>
<comment type="similarity">
    <text evidence="1">Belongs to the glycosyl hydrolase 19 family.</text>
</comment>
<evidence type="ECO:0000305" key="1"/>
<sequence length="200" mass="22895">MTMMISEVTFNKIFPHAVKGVYQAISAQIEKAGCVNKMQQAMFLAQCGHESGGFIRFKENLNYSWLGLSQTFRKYFPDPLTAKKYERKPELIANRIYANRLGNGDEKSGDGWKYRGRGLIQITGKDNYAAFRKWLGRDIEPEDVAGNLDLSVKTAVWYWKCYELAELNSVEKVTRRINGGLNGIDERCKLYRALMVTDND</sequence>
<organism>
    <name type="scientific">Haemophilus influenzae (strain ATCC 51907 / DSM 11121 / KW20 / Rd)</name>
    <dbReference type="NCBI Taxonomy" id="71421"/>
    <lineage>
        <taxon>Bacteria</taxon>
        <taxon>Pseudomonadati</taxon>
        <taxon>Pseudomonadota</taxon>
        <taxon>Gammaproteobacteria</taxon>
        <taxon>Pasteurellales</taxon>
        <taxon>Pasteurellaceae</taxon>
        <taxon>Haemophilus</taxon>
    </lineage>
</organism>
<accession>P44187</accession>
<dbReference type="EMBL" id="L42023">
    <property type="protein sequence ID" value="AAC23066.1"/>
    <property type="molecule type" value="Genomic_DNA"/>
</dbReference>
<dbReference type="PIR" id="H64028">
    <property type="entry name" value="H64028"/>
</dbReference>
<dbReference type="RefSeq" id="NP_439566.1">
    <property type="nucleotide sequence ID" value="NC_000907.1"/>
</dbReference>
<dbReference type="SMR" id="P44187"/>
<dbReference type="STRING" id="71421.HI_1415"/>
<dbReference type="CAZy" id="GH19">
    <property type="family name" value="Glycoside Hydrolase Family 19"/>
</dbReference>
<dbReference type="EnsemblBacteria" id="AAC23066">
    <property type="protein sequence ID" value="AAC23066"/>
    <property type="gene ID" value="HI_1415"/>
</dbReference>
<dbReference type="KEGG" id="hin:HI_1415"/>
<dbReference type="PATRIC" id="fig|71421.8.peg.1474"/>
<dbReference type="eggNOG" id="COG3179">
    <property type="taxonomic scope" value="Bacteria"/>
</dbReference>
<dbReference type="HOGENOM" id="CLU_073833_2_0_6"/>
<dbReference type="OrthoDB" id="9798982at2"/>
<dbReference type="PhylomeDB" id="P44187"/>
<dbReference type="BioCyc" id="HINF71421:G1GJ1-1439-MONOMER"/>
<dbReference type="Proteomes" id="UP000000579">
    <property type="component" value="Chromosome"/>
</dbReference>
<dbReference type="GO" id="GO:0004568">
    <property type="term" value="F:chitinase activity"/>
    <property type="evidence" value="ECO:0007669"/>
    <property type="project" value="InterPro"/>
</dbReference>
<dbReference type="GO" id="GO:0016998">
    <property type="term" value="P:cell wall macromolecule catabolic process"/>
    <property type="evidence" value="ECO:0007669"/>
    <property type="project" value="InterPro"/>
</dbReference>
<dbReference type="GO" id="GO:0006032">
    <property type="term" value="P:chitin catabolic process"/>
    <property type="evidence" value="ECO:0007669"/>
    <property type="project" value="InterPro"/>
</dbReference>
<dbReference type="Gene3D" id="1.10.530.10">
    <property type="match status" value="1"/>
</dbReference>
<dbReference type="InterPro" id="IPR052354">
    <property type="entry name" value="Cell_Wall_Dynamics_Protein"/>
</dbReference>
<dbReference type="InterPro" id="IPR000726">
    <property type="entry name" value="Glyco_hydro_19_cat"/>
</dbReference>
<dbReference type="InterPro" id="IPR023346">
    <property type="entry name" value="Lysozyme-like_dom_sf"/>
</dbReference>
<dbReference type="PANTHER" id="PTHR34408">
    <property type="entry name" value="FAMILY PROTEIN, PUTATIVE-RELATED"/>
    <property type="match status" value="1"/>
</dbReference>
<dbReference type="PANTHER" id="PTHR34408:SF1">
    <property type="entry name" value="GLYCOSYL HYDROLASE FAMILY 19 DOMAIN-CONTAINING PROTEIN HI_1415"/>
    <property type="match status" value="1"/>
</dbReference>
<dbReference type="Pfam" id="PF00182">
    <property type="entry name" value="Glyco_hydro_19"/>
    <property type="match status" value="1"/>
</dbReference>
<dbReference type="SUPFAM" id="SSF53955">
    <property type="entry name" value="Lysozyme-like"/>
    <property type="match status" value="1"/>
</dbReference>
<keyword id="KW-1185">Reference proteome</keyword>
<name>Y1415_HAEIN</name>
<feature type="chain" id="PRO_0000078052" description="Glycosyl hydrolase family 19 domain-containing protein HI_1415">
    <location>
        <begin position="1"/>
        <end position="200"/>
    </location>
</feature>